<name>SFSA_CITK8</name>
<keyword id="KW-1185">Reference proteome</keyword>
<sequence length="234" mass="26311">MQFSPPLQRATLIQRYKRFLADVITPDGTELTLHCPNTGAMTGCATPGDTVWYSTSENTKRKYPHTWELTQTRTGALICVNTLWANRLTKEAIQNEQLSELSGYSLLKSEVKYGAERSRIDFMLQADSRPDCYIEVKSVTLAEQEYGYFPDAVTLRGQKHLRELMSVAAEGHRAVVLFAVLHSAITRFSPARHIDAKYAQLLIEAQLKGVEILVYKAELSAEGMTLKEPLPMTL</sequence>
<accession>A8ALE4</accession>
<proteinExistence type="inferred from homology"/>
<feature type="chain" id="PRO_1000007972" description="Sugar fermentation stimulation protein homolog">
    <location>
        <begin position="1"/>
        <end position="234"/>
    </location>
</feature>
<dbReference type="EMBL" id="CP000822">
    <property type="protein sequence ID" value="ABV14307.1"/>
    <property type="molecule type" value="Genomic_DNA"/>
</dbReference>
<dbReference type="RefSeq" id="WP_012134013.1">
    <property type="nucleotide sequence ID" value="NC_009792.1"/>
</dbReference>
<dbReference type="SMR" id="A8ALE4"/>
<dbReference type="STRING" id="290338.CKO_03223"/>
<dbReference type="GeneID" id="45137003"/>
<dbReference type="KEGG" id="cko:CKO_03223"/>
<dbReference type="HOGENOM" id="CLU_052299_2_0_6"/>
<dbReference type="OrthoDB" id="9802365at2"/>
<dbReference type="Proteomes" id="UP000008148">
    <property type="component" value="Chromosome"/>
</dbReference>
<dbReference type="GO" id="GO:0003677">
    <property type="term" value="F:DNA binding"/>
    <property type="evidence" value="ECO:0007669"/>
    <property type="project" value="InterPro"/>
</dbReference>
<dbReference type="CDD" id="cd22359">
    <property type="entry name" value="SfsA-like_bacterial"/>
    <property type="match status" value="1"/>
</dbReference>
<dbReference type="FunFam" id="2.40.50.580:FF:000001">
    <property type="entry name" value="Sugar fermentation stimulation protein A"/>
    <property type="match status" value="1"/>
</dbReference>
<dbReference type="FunFam" id="3.40.1350.60:FF:000001">
    <property type="entry name" value="Sugar fermentation stimulation protein A"/>
    <property type="match status" value="1"/>
</dbReference>
<dbReference type="Gene3D" id="2.40.50.580">
    <property type="match status" value="1"/>
</dbReference>
<dbReference type="Gene3D" id="3.40.1350.60">
    <property type="match status" value="1"/>
</dbReference>
<dbReference type="HAMAP" id="MF_00095">
    <property type="entry name" value="SfsA"/>
    <property type="match status" value="1"/>
</dbReference>
<dbReference type="InterPro" id="IPR005224">
    <property type="entry name" value="SfsA"/>
</dbReference>
<dbReference type="InterPro" id="IPR040452">
    <property type="entry name" value="SfsA_C"/>
</dbReference>
<dbReference type="InterPro" id="IPR041465">
    <property type="entry name" value="SfsA_N"/>
</dbReference>
<dbReference type="NCBIfam" id="TIGR00230">
    <property type="entry name" value="sfsA"/>
    <property type="match status" value="1"/>
</dbReference>
<dbReference type="PANTHER" id="PTHR30545">
    <property type="entry name" value="SUGAR FERMENTATION STIMULATION PROTEIN A"/>
    <property type="match status" value="1"/>
</dbReference>
<dbReference type="PANTHER" id="PTHR30545:SF2">
    <property type="entry name" value="SUGAR FERMENTATION STIMULATION PROTEIN A"/>
    <property type="match status" value="1"/>
</dbReference>
<dbReference type="Pfam" id="PF03749">
    <property type="entry name" value="SfsA"/>
    <property type="match status" value="1"/>
</dbReference>
<dbReference type="Pfam" id="PF17746">
    <property type="entry name" value="SfsA_N"/>
    <property type="match status" value="1"/>
</dbReference>
<gene>
    <name evidence="1" type="primary">sfsA</name>
    <name type="ordered locus">CKO_03223</name>
</gene>
<evidence type="ECO:0000255" key="1">
    <source>
        <dbReference type="HAMAP-Rule" id="MF_00095"/>
    </source>
</evidence>
<organism>
    <name type="scientific">Citrobacter koseri (strain ATCC BAA-895 / CDC 4225-83 / SGSC4696)</name>
    <dbReference type="NCBI Taxonomy" id="290338"/>
    <lineage>
        <taxon>Bacteria</taxon>
        <taxon>Pseudomonadati</taxon>
        <taxon>Pseudomonadota</taxon>
        <taxon>Gammaproteobacteria</taxon>
        <taxon>Enterobacterales</taxon>
        <taxon>Enterobacteriaceae</taxon>
        <taxon>Citrobacter</taxon>
    </lineage>
</organism>
<reference key="1">
    <citation type="submission" date="2007-08" db="EMBL/GenBank/DDBJ databases">
        <authorList>
            <consortium name="The Citrobacter koseri Genome Sequencing Project"/>
            <person name="McClelland M."/>
            <person name="Sanderson E.K."/>
            <person name="Porwollik S."/>
            <person name="Spieth J."/>
            <person name="Clifton W.S."/>
            <person name="Latreille P."/>
            <person name="Courtney L."/>
            <person name="Wang C."/>
            <person name="Pepin K."/>
            <person name="Bhonagiri V."/>
            <person name="Nash W."/>
            <person name="Johnson M."/>
            <person name="Thiruvilangam P."/>
            <person name="Wilson R."/>
        </authorList>
    </citation>
    <scope>NUCLEOTIDE SEQUENCE [LARGE SCALE GENOMIC DNA]</scope>
    <source>
        <strain>ATCC BAA-895 / CDC 4225-83 / SGSC4696</strain>
    </source>
</reference>
<protein>
    <recommendedName>
        <fullName evidence="1">Sugar fermentation stimulation protein homolog</fullName>
    </recommendedName>
</protein>
<comment type="similarity">
    <text evidence="1">Belongs to the SfsA family.</text>
</comment>